<protein>
    <recommendedName>
        <fullName>DENN domain-containing protein 4B</fullName>
    </recommendedName>
    <alternativeName>
        <fullName>Brain-specific gene 4 protein</fullName>
        <shortName>Brain specific protein 4</shortName>
    </alternativeName>
</protein>
<sequence length="1499" mass="164740">MAEERPPRLVDYFVVAGLAGNGAPIPEEKWVPEPTGPLRPPRPAEPITDVAVIARALGEEVPQGYTCIQTSAGGHPLELSAGLLGGTQPVICYRRGRDKPPLVELGVLYEGKERPKLGFQVLDTTPYSHSANLAPPGPGHPRTYLMYRRAAEGAGLHALGITDLCLVLPSKGEGTPHTYCRLPRNLNPGMWGPAVYLCYKVGLAKANTLVYEAELLGRYPEEDNEAFPLPESVPVFCLPMGATIECWPAQTKYPVPVFSTFVLTGAAGDKVYGAALQFYEAFPRARLSERQARALGLMSAVERGRALGGRAVRSRRAIAVLSRWPAFPAFRAFLTFLYRYSVSGPHRLPLEAHISHFIHNVPFPSPQRPRILVQMSPYDNLLLCQPVSSPLPLSGASFLQLLQNLGPELAITLLLAVLTEHKLLVHSLRPDLLTSVCEALVSMIFPLHWQCPYIPLCPLVLADVLSAPVPFIVGIHSSYFDLHDPPADVICVDLDTNTLFQKEEKKPLSARTLPRRPYKLLLATLTSLYQQLDQTYTGPEEEASLEFLLTDYEAVCGRRTRLEREVQGAFLRFMACLLKGYRNFLRPLTQAPSEGSRDVDNLFYLQGFLKSRERSSHKLYSQLLHTQMFSQFIEECSFGSARHAALEFFDSCVDKVHPEQEKPEPTPLVELEELSGSELTVFITPPEEPPVLEGSESTPQYCYDGFPELKAELFESPQEQQGALPVPGPSRSAPSSPAPRRTKQEMKVAQRMAQKSATVPELWARCLLGHCYGLWFLCLPAYVRSVPSRVRALHTAYHVLREMENRKVVLPDEVCYRVLMQLCSHYGQPVLSVRVMLEMRRAGIVPNTITYGYYNKAVLESKWPSGTPGGRLRWAKLRNVVLGAAQFRQPLKDRRQQQQQQQQQQQQKQQVAEQQKSGSSQTEPYLERPSPTRPLQRQTTWAGRSLREPSSPMGRLVKSGSLGSARGTQPTVEAGVAHMIEALGVLEPRGSPVPWQDGSLSDLSLTGEEMAPGGSPGGSGSALSAQSTEALEGISGRGSKTSGCQEEVGTPRKGLGARLQQLLTPSRRASASRIPPPELPSDLPPAARRSPMDSLLWPRERPGSTASESSASLGSEWDISESSLSSLSLRRSSERLSDTPGAFQPPSLEILMSSCSLCHACDSLVYDEEIMAGWAPDDSNLNTTCPFCACHFVPLLSVQTLDSRPSAPSPKSSLAGASGCKDAPAPGGPGPVLSDRRFCLALDQPQLCNGHMGSASRRVENGAWAYLSPLVLRKELESLVENEGSEVLALPELPAAHPIIFWNLLWYFQRLRLPSVLPGLVLASCNGPPPSQLSQGPSPWLTPDPASVHVHLLWDVLTPDPNSCPPLYVLWRVHSQIPQRVVWPGPVPSCLSLALLESVLRHVGLNEVHKAVGLLLETLGPPPTGLHLQRGIYREILFLTMAALGKDHVDIVAFDKKYKSAFNKLASSMGKEELRQRRAQMPTPKAIDCRKCFGAPLEC</sequence>
<gene>
    <name type="primary">Dennd4b</name>
    <name type="synonym">Bsg4</name>
    <name type="synonym">Bsp4</name>
    <name type="synonym">Kiaa0476</name>
</gene>
<organism>
    <name type="scientific">Mus musculus</name>
    <name type="common">Mouse</name>
    <dbReference type="NCBI Taxonomy" id="10090"/>
    <lineage>
        <taxon>Eukaryota</taxon>
        <taxon>Metazoa</taxon>
        <taxon>Chordata</taxon>
        <taxon>Craniata</taxon>
        <taxon>Vertebrata</taxon>
        <taxon>Euteleostomi</taxon>
        <taxon>Mammalia</taxon>
        <taxon>Eutheria</taxon>
        <taxon>Euarchontoglires</taxon>
        <taxon>Glires</taxon>
        <taxon>Rodentia</taxon>
        <taxon>Myomorpha</taxon>
        <taxon>Muroidea</taxon>
        <taxon>Muridae</taxon>
        <taxon>Murinae</taxon>
        <taxon>Mus</taxon>
        <taxon>Mus</taxon>
    </lineage>
</organism>
<keyword id="KW-0025">Alternative splicing</keyword>
<keyword id="KW-0333">Golgi apparatus</keyword>
<keyword id="KW-0344">Guanine-nucleotide releasing factor</keyword>
<keyword id="KW-0597">Phosphoprotein</keyword>
<keyword id="KW-1185">Reference proteome</keyword>
<keyword id="KW-0677">Repeat</keyword>
<evidence type="ECO:0000250" key="1"/>
<evidence type="ECO:0000250" key="2">
    <source>
        <dbReference type="UniProtKB" id="O75064"/>
    </source>
</evidence>
<evidence type="ECO:0000255" key="3">
    <source>
        <dbReference type="PROSITE-ProRule" id="PRU00304"/>
    </source>
</evidence>
<evidence type="ECO:0000255" key="4">
    <source>
        <dbReference type="PROSITE-ProRule" id="PRU00831"/>
    </source>
</evidence>
<evidence type="ECO:0000256" key="5">
    <source>
        <dbReference type="SAM" id="MobiDB-lite"/>
    </source>
</evidence>
<evidence type="ECO:0000303" key="6">
    <source>
    </source>
</evidence>
<evidence type="ECO:0000303" key="7">
    <source ref="1"/>
</evidence>
<evidence type="ECO:0000305" key="8"/>
<accession>Q3U1Y4</accession>
<accession>Q6NZJ7</accession>
<accession>Q6R5M4</accession>
<accession>Q80TZ2</accession>
<accession>Q80VU7</accession>
<accession>Q8CGE6</accession>
<accession>Q8R0E9</accession>
<name>DEN4B_MOUSE</name>
<feature type="chain" id="PRO_0000304679" description="DENN domain-containing protein 4B">
    <location>
        <begin position="1"/>
        <end position="1499"/>
    </location>
</feature>
<feature type="domain" description="MABP" evidence="4">
    <location>
        <begin position="44"/>
        <end position="203"/>
    </location>
</feature>
<feature type="domain" description="uDENN" evidence="3">
    <location>
        <begin position="195"/>
        <end position="369"/>
    </location>
</feature>
<feature type="domain" description="cDENN" evidence="3">
    <location>
        <begin position="390"/>
        <end position="526"/>
    </location>
</feature>
<feature type="domain" description="dDENN" evidence="3">
    <location>
        <begin position="528"/>
        <end position="644"/>
    </location>
</feature>
<feature type="repeat" description="PPR 1">
    <location>
        <begin position="775"/>
        <end position="811"/>
    </location>
</feature>
<feature type="repeat" description="PPR 2">
    <location>
        <begin position="812"/>
        <end position="846"/>
    </location>
</feature>
<feature type="region of interest" description="Disordered" evidence="5">
    <location>
        <begin position="26"/>
        <end position="45"/>
    </location>
</feature>
<feature type="region of interest" description="Disordered" evidence="5">
    <location>
        <begin position="717"/>
        <end position="744"/>
    </location>
</feature>
<feature type="region of interest" description="Disordered" evidence="5">
    <location>
        <begin position="890"/>
        <end position="968"/>
    </location>
</feature>
<feature type="region of interest" description="Disordered" evidence="5">
    <location>
        <begin position="988"/>
        <end position="1115"/>
    </location>
</feature>
<feature type="region of interest" description="Disordered" evidence="5">
    <location>
        <begin position="1204"/>
        <end position="1226"/>
    </location>
</feature>
<feature type="compositionally biased region" description="Pro residues" evidence="5">
    <location>
        <begin position="34"/>
        <end position="44"/>
    </location>
</feature>
<feature type="compositionally biased region" description="Low complexity" evidence="5">
    <location>
        <begin position="729"/>
        <end position="739"/>
    </location>
</feature>
<feature type="compositionally biased region" description="Low complexity" evidence="5">
    <location>
        <begin position="897"/>
        <end position="915"/>
    </location>
</feature>
<feature type="compositionally biased region" description="Polar residues" evidence="5">
    <location>
        <begin position="933"/>
        <end position="942"/>
    </location>
</feature>
<feature type="compositionally biased region" description="Pro residues" evidence="5">
    <location>
        <begin position="1074"/>
        <end position="1083"/>
    </location>
</feature>
<feature type="compositionally biased region" description="Low complexity" evidence="5">
    <location>
        <begin position="1103"/>
        <end position="1115"/>
    </location>
</feature>
<feature type="modified residue" description="Phosphoserine" evidence="2">
    <location>
        <position position="951"/>
    </location>
</feature>
<feature type="modified residue" description="Phosphoserine" evidence="2">
    <location>
        <position position="1090"/>
    </location>
</feature>
<feature type="splice variant" id="VSP_028093" description="In isoform 2." evidence="7">
    <location>
        <begin position="1"/>
        <end position="274"/>
    </location>
</feature>
<feature type="splice variant" id="VSP_028094" description="In isoform 2." evidence="7">
    <original>AL</original>
    <variation>MR</variation>
    <location>
        <begin position="275"/>
        <end position="276"/>
    </location>
</feature>
<feature type="splice variant" id="VSP_028095" description="In isoform 2." evidence="7">
    <location>
        <position position="502"/>
    </location>
</feature>
<feature type="splice variant" id="VSP_028096" description="In isoform 3." evidence="6">
    <location>
        <begin position="728"/>
        <end position="842"/>
    </location>
</feature>
<feature type="splice variant" id="VSP_028097" description="In isoform 2." evidence="7">
    <location>
        <begin position="910"/>
        <end position="920"/>
    </location>
</feature>
<feature type="sequence conflict" description="In Ref. 4; BAC65576." evidence="8" ref="4">
    <original>M</original>
    <variation>V</variation>
    <location>
        <position position="979"/>
    </location>
</feature>
<proteinExistence type="evidence at protein level"/>
<comment type="function">
    <text evidence="1">Guanine nucleotide exchange factor (GEF) which may activate RAB10. Promotes the exchange of GDP to GTP, converting inactive GDP-bound Rab proteins into their active GTP-bound form (By similarity).</text>
</comment>
<comment type="subcellular location">
    <subcellularLocation>
        <location>Golgi apparatus</location>
    </subcellularLocation>
</comment>
<comment type="alternative products">
    <event type="alternative splicing"/>
    <isoform>
        <id>Q3U1Y4-1</id>
        <name>1</name>
        <sequence type="displayed"/>
    </isoform>
    <isoform>
        <id>Q3U1Y4-2</id>
        <name>2</name>
        <sequence type="described" ref="VSP_028093 VSP_028094 VSP_028095 VSP_028097"/>
    </isoform>
    <isoform>
        <id>Q3U1Y4-3</id>
        <name>3</name>
        <sequence type="described" ref="VSP_028096"/>
    </isoform>
</comment>
<comment type="sequence caution" evidence="8">
    <conflict type="erroneous initiation">
        <sequence resource="EMBL-CDS" id="AAH66102"/>
    </conflict>
</comment>
<comment type="sequence caution" evidence="8">
    <conflict type="miscellaneous discrepancy">
        <sequence resource="EMBL-CDS" id="BAC65576"/>
    </conflict>
    <text>Wrong gene model based on unspliced pre-RNA.</text>
</comment>
<comment type="sequence caution" evidence="8">
    <conflict type="erroneous initiation">
        <sequence resource="EMBL-CDS" id="BAE33359"/>
    </conflict>
</comment>
<reference key="1">
    <citation type="submission" date="2003-12" db="EMBL/GenBank/DDBJ databases">
        <title>Cloning and characterization of a novel mouse gene Bsg4 cDNA specifically expressed in brain.</title>
        <authorList>
            <person name="Chen W."/>
            <person name="Zhang J."/>
            <person name="Chen R."/>
            <person name="Ci H.L."/>
            <person name="Li Y.P."/>
        </authorList>
    </citation>
    <scope>NUCLEOTIDE SEQUENCE [MRNA] (ISOFORM 2)</scope>
    <source>
        <strain>C57BL/6J</strain>
    </source>
</reference>
<reference key="2">
    <citation type="journal article" date="2005" name="Science">
        <title>The transcriptional landscape of the mammalian genome.</title>
        <authorList>
            <person name="Carninci P."/>
            <person name="Kasukawa T."/>
            <person name="Katayama S."/>
            <person name="Gough J."/>
            <person name="Frith M.C."/>
            <person name="Maeda N."/>
            <person name="Oyama R."/>
            <person name="Ravasi T."/>
            <person name="Lenhard B."/>
            <person name="Wells C."/>
            <person name="Kodzius R."/>
            <person name="Shimokawa K."/>
            <person name="Bajic V.B."/>
            <person name="Brenner S.E."/>
            <person name="Batalov S."/>
            <person name="Forrest A.R."/>
            <person name="Zavolan M."/>
            <person name="Davis M.J."/>
            <person name="Wilming L.G."/>
            <person name="Aidinis V."/>
            <person name="Allen J.E."/>
            <person name="Ambesi-Impiombato A."/>
            <person name="Apweiler R."/>
            <person name="Aturaliya R.N."/>
            <person name="Bailey T.L."/>
            <person name="Bansal M."/>
            <person name="Baxter L."/>
            <person name="Beisel K.W."/>
            <person name="Bersano T."/>
            <person name="Bono H."/>
            <person name="Chalk A.M."/>
            <person name="Chiu K.P."/>
            <person name="Choudhary V."/>
            <person name="Christoffels A."/>
            <person name="Clutterbuck D.R."/>
            <person name="Crowe M.L."/>
            <person name="Dalla E."/>
            <person name="Dalrymple B.P."/>
            <person name="de Bono B."/>
            <person name="Della Gatta G."/>
            <person name="di Bernardo D."/>
            <person name="Down T."/>
            <person name="Engstrom P."/>
            <person name="Fagiolini M."/>
            <person name="Faulkner G."/>
            <person name="Fletcher C.F."/>
            <person name="Fukushima T."/>
            <person name="Furuno M."/>
            <person name="Futaki S."/>
            <person name="Gariboldi M."/>
            <person name="Georgii-Hemming P."/>
            <person name="Gingeras T.R."/>
            <person name="Gojobori T."/>
            <person name="Green R.E."/>
            <person name="Gustincich S."/>
            <person name="Harbers M."/>
            <person name="Hayashi Y."/>
            <person name="Hensch T.K."/>
            <person name="Hirokawa N."/>
            <person name="Hill D."/>
            <person name="Huminiecki L."/>
            <person name="Iacono M."/>
            <person name="Ikeo K."/>
            <person name="Iwama A."/>
            <person name="Ishikawa T."/>
            <person name="Jakt M."/>
            <person name="Kanapin A."/>
            <person name="Katoh M."/>
            <person name="Kawasawa Y."/>
            <person name="Kelso J."/>
            <person name="Kitamura H."/>
            <person name="Kitano H."/>
            <person name="Kollias G."/>
            <person name="Krishnan S.P."/>
            <person name="Kruger A."/>
            <person name="Kummerfeld S.K."/>
            <person name="Kurochkin I.V."/>
            <person name="Lareau L.F."/>
            <person name="Lazarevic D."/>
            <person name="Lipovich L."/>
            <person name="Liu J."/>
            <person name="Liuni S."/>
            <person name="McWilliam S."/>
            <person name="Madan Babu M."/>
            <person name="Madera M."/>
            <person name="Marchionni L."/>
            <person name="Matsuda H."/>
            <person name="Matsuzawa S."/>
            <person name="Miki H."/>
            <person name="Mignone F."/>
            <person name="Miyake S."/>
            <person name="Morris K."/>
            <person name="Mottagui-Tabar S."/>
            <person name="Mulder N."/>
            <person name="Nakano N."/>
            <person name="Nakauchi H."/>
            <person name="Ng P."/>
            <person name="Nilsson R."/>
            <person name="Nishiguchi S."/>
            <person name="Nishikawa S."/>
            <person name="Nori F."/>
            <person name="Ohara O."/>
            <person name="Okazaki Y."/>
            <person name="Orlando V."/>
            <person name="Pang K.C."/>
            <person name="Pavan W.J."/>
            <person name="Pavesi G."/>
            <person name="Pesole G."/>
            <person name="Petrovsky N."/>
            <person name="Piazza S."/>
            <person name="Reed J."/>
            <person name="Reid J.F."/>
            <person name="Ring B.Z."/>
            <person name="Ringwald M."/>
            <person name="Rost B."/>
            <person name="Ruan Y."/>
            <person name="Salzberg S.L."/>
            <person name="Sandelin A."/>
            <person name="Schneider C."/>
            <person name="Schoenbach C."/>
            <person name="Sekiguchi K."/>
            <person name="Semple C.A."/>
            <person name="Seno S."/>
            <person name="Sessa L."/>
            <person name="Sheng Y."/>
            <person name="Shibata Y."/>
            <person name="Shimada H."/>
            <person name="Shimada K."/>
            <person name="Silva D."/>
            <person name="Sinclair B."/>
            <person name="Sperling S."/>
            <person name="Stupka E."/>
            <person name="Sugiura K."/>
            <person name="Sultana R."/>
            <person name="Takenaka Y."/>
            <person name="Taki K."/>
            <person name="Tammoja K."/>
            <person name="Tan S.L."/>
            <person name="Tang S."/>
            <person name="Taylor M.S."/>
            <person name="Tegner J."/>
            <person name="Teichmann S.A."/>
            <person name="Ueda H.R."/>
            <person name="van Nimwegen E."/>
            <person name="Verardo R."/>
            <person name="Wei C.L."/>
            <person name="Yagi K."/>
            <person name="Yamanishi H."/>
            <person name="Zabarovsky E."/>
            <person name="Zhu S."/>
            <person name="Zimmer A."/>
            <person name="Hide W."/>
            <person name="Bult C."/>
            <person name="Grimmond S.M."/>
            <person name="Teasdale R.D."/>
            <person name="Liu E.T."/>
            <person name="Brusic V."/>
            <person name="Quackenbush J."/>
            <person name="Wahlestedt C."/>
            <person name="Mattick J.S."/>
            <person name="Hume D.A."/>
            <person name="Kai C."/>
            <person name="Sasaki D."/>
            <person name="Tomaru Y."/>
            <person name="Fukuda S."/>
            <person name="Kanamori-Katayama M."/>
            <person name="Suzuki M."/>
            <person name="Aoki J."/>
            <person name="Arakawa T."/>
            <person name="Iida J."/>
            <person name="Imamura K."/>
            <person name="Itoh M."/>
            <person name="Kato T."/>
            <person name="Kawaji H."/>
            <person name="Kawagashira N."/>
            <person name="Kawashima T."/>
            <person name="Kojima M."/>
            <person name="Kondo S."/>
            <person name="Konno H."/>
            <person name="Nakano K."/>
            <person name="Ninomiya N."/>
            <person name="Nishio T."/>
            <person name="Okada M."/>
            <person name="Plessy C."/>
            <person name="Shibata K."/>
            <person name="Shiraki T."/>
            <person name="Suzuki S."/>
            <person name="Tagami M."/>
            <person name="Waki K."/>
            <person name="Watahiki A."/>
            <person name="Okamura-Oho Y."/>
            <person name="Suzuki H."/>
            <person name="Kawai J."/>
            <person name="Hayashizaki Y."/>
        </authorList>
    </citation>
    <scope>NUCLEOTIDE SEQUENCE [LARGE SCALE MRNA] (ISOFORM 1)</scope>
    <source>
        <strain>C57BL/6J</strain>
    </source>
</reference>
<reference key="3">
    <citation type="journal article" date="2004" name="Genome Res.">
        <title>The status, quality, and expansion of the NIH full-length cDNA project: the Mammalian Gene Collection (MGC).</title>
        <authorList>
            <consortium name="The MGC Project Team"/>
        </authorList>
    </citation>
    <scope>NUCLEOTIDE SEQUENCE [LARGE SCALE MRNA] OF 16-1499 (ISOFORM 3)</scope>
    <source>
        <strain>FVB/N</strain>
        <tissue>Brain</tissue>
        <tissue>Colon</tissue>
        <tissue>Eye</tissue>
        <tissue>Salivary gland</tissue>
    </source>
</reference>
<reference key="4">
    <citation type="journal article" date="2003" name="DNA Res.">
        <title>Prediction of the coding sequences of mouse homologues of KIAA gene: II. The complete nucleotide sequences of 400 mouse KIAA-homologous cDNAs identified by screening of terminal sequences of cDNA clones randomly sampled from size-fractionated libraries.</title>
        <authorList>
            <person name="Okazaki N."/>
            <person name="Kikuno R."/>
            <person name="Ohara R."/>
            <person name="Inamoto S."/>
            <person name="Aizawa H."/>
            <person name="Yuasa S."/>
            <person name="Nakajima D."/>
            <person name="Nagase T."/>
            <person name="Ohara O."/>
            <person name="Koga H."/>
        </authorList>
    </citation>
    <scope>NUCLEOTIDE SEQUENCE [LARGE SCALE MRNA] OF 594-1499</scope>
</reference>
<reference key="5">
    <citation type="journal article" date="2010" name="Cell">
        <title>A tissue-specific atlas of mouse protein phosphorylation and expression.</title>
        <authorList>
            <person name="Huttlin E.L."/>
            <person name="Jedrychowski M.P."/>
            <person name="Elias J.E."/>
            <person name="Goswami T."/>
            <person name="Rad R."/>
            <person name="Beausoleil S.A."/>
            <person name="Villen J."/>
            <person name="Haas W."/>
            <person name="Sowa M.E."/>
            <person name="Gygi S.P."/>
        </authorList>
    </citation>
    <scope>IDENTIFICATION BY MASS SPECTROMETRY [LARGE SCALE ANALYSIS]</scope>
    <source>
        <tissue>Brain</tissue>
        <tissue>Spleen</tissue>
        <tissue>Testis</tissue>
    </source>
</reference>
<dbReference type="EMBL" id="AY512564">
    <property type="protein sequence ID" value="AAR97575.1"/>
    <property type="molecule type" value="mRNA"/>
</dbReference>
<dbReference type="EMBL" id="AK155638">
    <property type="protein sequence ID" value="BAE33359.1"/>
    <property type="status" value="ALT_INIT"/>
    <property type="molecule type" value="mRNA"/>
</dbReference>
<dbReference type="EMBL" id="BC026996">
    <property type="protein sequence ID" value="AAH26996.1"/>
    <property type="molecule type" value="mRNA"/>
</dbReference>
<dbReference type="EMBL" id="BC040460">
    <property type="protein sequence ID" value="AAH40460.1"/>
    <property type="molecule type" value="mRNA"/>
</dbReference>
<dbReference type="EMBL" id="BC049972">
    <property type="protein sequence ID" value="AAH49972.1"/>
    <property type="molecule type" value="mRNA"/>
</dbReference>
<dbReference type="EMBL" id="BC066102">
    <property type="protein sequence ID" value="AAH66102.2"/>
    <property type="status" value="ALT_INIT"/>
    <property type="molecule type" value="mRNA"/>
</dbReference>
<dbReference type="EMBL" id="AK122294">
    <property type="protein sequence ID" value="BAC65576.3"/>
    <property type="status" value="ALT_SEQ"/>
    <property type="molecule type" value="Transcribed_RNA"/>
</dbReference>
<dbReference type="CCDS" id="CCDS89660.1">
    <molecule id="Q3U1Y4-1"/>
</dbReference>
<dbReference type="RefSeq" id="NP_001343412.1">
    <molecule id="Q3U1Y4-1"/>
    <property type="nucleotide sequence ID" value="NM_001356483.1"/>
</dbReference>
<dbReference type="RefSeq" id="NP_001392343.1">
    <molecule id="Q3U1Y4-1"/>
    <property type="nucleotide sequence ID" value="NM_001405414.1"/>
</dbReference>
<dbReference type="RefSeq" id="NP_958809.3">
    <property type="nucleotide sequence ID" value="NM_201407.4"/>
</dbReference>
<dbReference type="RefSeq" id="XP_006501418.1">
    <property type="nucleotide sequence ID" value="XM_006501355.3"/>
</dbReference>
<dbReference type="RefSeq" id="XP_006501419.1">
    <property type="nucleotide sequence ID" value="XM_006501356.3"/>
</dbReference>
<dbReference type="SMR" id="Q3U1Y4"/>
<dbReference type="BioGRID" id="230857">
    <property type="interactions" value="1"/>
</dbReference>
<dbReference type="FunCoup" id="Q3U1Y4">
    <property type="interactions" value="2541"/>
</dbReference>
<dbReference type="STRING" id="10090.ENSMUSP00000096514"/>
<dbReference type="GlyGen" id="Q3U1Y4">
    <property type="glycosylation" value="1 site"/>
</dbReference>
<dbReference type="iPTMnet" id="Q3U1Y4"/>
<dbReference type="PhosphoSitePlus" id="Q3U1Y4"/>
<dbReference type="SwissPalm" id="Q3U1Y4"/>
<dbReference type="jPOST" id="Q3U1Y4"/>
<dbReference type="PaxDb" id="10090-ENSMUSP00000096514"/>
<dbReference type="PeptideAtlas" id="Q3U1Y4"/>
<dbReference type="ProteomicsDB" id="279370">
    <molecule id="Q3U1Y4-1"/>
</dbReference>
<dbReference type="ProteomicsDB" id="279371">
    <molecule id="Q3U1Y4-2"/>
</dbReference>
<dbReference type="ProteomicsDB" id="279372">
    <molecule id="Q3U1Y4-3"/>
</dbReference>
<dbReference type="Antibodypedia" id="50670">
    <property type="antibodies" value="23 antibodies from 7 providers"/>
</dbReference>
<dbReference type="DNASU" id="229541"/>
<dbReference type="Ensembl" id="ENSMUST00000129564.8">
    <molecule id="Q3U1Y4-1"/>
    <property type="protein sequence ID" value="ENSMUSP00000117354.2"/>
    <property type="gene ID" value="ENSMUSG00000042404.17"/>
</dbReference>
<dbReference type="GeneID" id="229541"/>
<dbReference type="KEGG" id="mmu:229541"/>
<dbReference type="UCSC" id="uc008qbx.3">
    <molecule id="Q3U1Y4-1"/>
    <property type="organism name" value="mouse"/>
</dbReference>
<dbReference type="UCSC" id="uc008qbz.1">
    <molecule id="Q3U1Y4-3"/>
    <property type="organism name" value="mouse"/>
</dbReference>
<dbReference type="AGR" id="MGI:2446201"/>
<dbReference type="CTD" id="9909"/>
<dbReference type="MGI" id="MGI:2446201">
    <property type="gene designation" value="Dennd4b"/>
</dbReference>
<dbReference type="VEuPathDB" id="HostDB:ENSMUSG00000042404"/>
<dbReference type="eggNOG" id="KOG2127">
    <property type="taxonomic scope" value="Eukaryota"/>
</dbReference>
<dbReference type="GeneTree" id="ENSGT00940000160472"/>
<dbReference type="HOGENOM" id="CLU_003074_0_0_1"/>
<dbReference type="InParanoid" id="Q3U1Y4"/>
<dbReference type="OMA" id="VVWPGPI"/>
<dbReference type="OrthoDB" id="75250at2759"/>
<dbReference type="PhylomeDB" id="Q3U1Y4"/>
<dbReference type="TreeFam" id="TF313237"/>
<dbReference type="Reactome" id="R-MMU-8876198">
    <property type="pathway name" value="RAB GEFs exchange GTP for GDP on RABs"/>
</dbReference>
<dbReference type="BioGRID-ORCS" id="229541">
    <property type="hits" value="0 hits in 77 CRISPR screens"/>
</dbReference>
<dbReference type="ChiTaRS" id="Dennd4b">
    <property type="organism name" value="mouse"/>
</dbReference>
<dbReference type="PRO" id="PR:Q3U1Y4"/>
<dbReference type="Proteomes" id="UP000000589">
    <property type="component" value="Chromosome 3"/>
</dbReference>
<dbReference type="RNAct" id="Q3U1Y4">
    <property type="molecule type" value="protein"/>
</dbReference>
<dbReference type="Bgee" id="ENSMUSG00000042404">
    <property type="expression patterns" value="Expressed in triceps brachii and 224 other cell types or tissues"/>
</dbReference>
<dbReference type="ExpressionAtlas" id="Q3U1Y4">
    <property type="expression patterns" value="baseline and differential"/>
</dbReference>
<dbReference type="GO" id="GO:0005794">
    <property type="term" value="C:Golgi apparatus"/>
    <property type="evidence" value="ECO:0000250"/>
    <property type="project" value="UniProtKB"/>
</dbReference>
<dbReference type="GO" id="GO:0005085">
    <property type="term" value="F:guanyl-nucleotide exchange factor activity"/>
    <property type="evidence" value="ECO:0000250"/>
    <property type="project" value="UniProtKB"/>
</dbReference>
<dbReference type="FunFam" id="2.100.10.50:FF:000001">
    <property type="entry name" value="DENN domain containing 4C"/>
    <property type="match status" value="1"/>
</dbReference>
<dbReference type="FunFam" id="1.25.40.10:FF:002523">
    <property type="entry name" value="DENN domain-containing protein 4B"/>
    <property type="match status" value="1"/>
</dbReference>
<dbReference type="Gene3D" id="2.100.10.50">
    <property type="match status" value="1"/>
</dbReference>
<dbReference type="Gene3D" id="3.40.50.11500">
    <property type="match status" value="1"/>
</dbReference>
<dbReference type="Gene3D" id="1.25.40.10">
    <property type="entry name" value="Tetratricopeptide repeat domain"/>
    <property type="match status" value="1"/>
</dbReference>
<dbReference type="InterPro" id="IPR001194">
    <property type="entry name" value="cDENN_dom"/>
</dbReference>
<dbReference type="InterPro" id="IPR005112">
    <property type="entry name" value="dDENN_dom"/>
</dbReference>
<dbReference type="InterPro" id="IPR043153">
    <property type="entry name" value="DENN_C"/>
</dbReference>
<dbReference type="InterPro" id="IPR051696">
    <property type="entry name" value="DENN_Domain_GEFs"/>
</dbReference>
<dbReference type="InterPro" id="IPR023341">
    <property type="entry name" value="MABP"/>
</dbReference>
<dbReference type="InterPro" id="IPR002885">
    <property type="entry name" value="Pentatricopeptide_rpt"/>
</dbReference>
<dbReference type="InterPro" id="IPR011990">
    <property type="entry name" value="TPR-like_helical_dom_sf"/>
</dbReference>
<dbReference type="InterPro" id="IPR037516">
    <property type="entry name" value="Tripartite_DENN"/>
</dbReference>
<dbReference type="InterPro" id="IPR005113">
    <property type="entry name" value="uDENN_dom"/>
</dbReference>
<dbReference type="NCBIfam" id="TIGR00756">
    <property type="entry name" value="PPR"/>
    <property type="match status" value="1"/>
</dbReference>
<dbReference type="PANTHER" id="PTHR12296">
    <property type="entry name" value="DENN DOMAIN-CONTAINING PROTEIN 4"/>
    <property type="match status" value="1"/>
</dbReference>
<dbReference type="PANTHER" id="PTHR12296:SF18">
    <property type="entry name" value="DENN DOMAIN-CONTAINING PROTEIN 4B"/>
    <property type="match status" value="1"/>
</dbReference>
<dbReference type="Pfam" id="PF03455">
    <property type="entry name" value="dDENN"/>
    <property type="match status" value="1"/>
</dbReference>
<dbReference type="Pfam" id="PF02141">
    <property type="entry name" value="DENN"/>
    <property type="match status" value="1"/>
</dbReference>
<dbReference type="Pfam" id="PF03456">
    <property type="entry name" value="uDENN"/>
    <property type="match status" value="1"/>
</dbReference>
<dbReference type="SMART" id="SM00801">
    <property type="entry name" value="dDENN"/>
    <property type="match status" value="1"/>
</dbReference>
<dbReference type="SMART" id="SM00799">
    <property type="entry name" value="DENN"/>
    <property type="match status" value="1"/>
</dbReference>
<dbReference type="SMART" id="SM00800">
    <property type="entry name" value="uDENN"/>
    <property type="match status" value="1"/>
</dbReference>
<dbReference type="PROSITE" id="PS50211">
    <property type="entry name" value="DENN"/>
    <property type="match status" value="1"/>
</dbReference>
<dbReference type="PROSITE" id="PS51498">
    <property type="entry name" value="MABP"/>
    <property type="match status" value="1"/>
</dbReference>
<dbReference type="PROSITE" id="PS51375">
    <property type="entry name" value="PPR"/>
    <property type="match status" value="1"/>
</dbReference>